<feature type="signal peptide" evidence="2">
    <location>
        <begin position="1"/>
        <end position="20"/>
    </location>
</feature>
<feature type="propeptide" id="PRO_0000024101" evidence="2">
    <location>
        <begin position="21"/>
        <end position="72"/>
    </location>
</feature>
<feature type="peptide" id="PRO_0000024102" description="Phytosulfokine-alpha-like" evidence="2">
    <location>
        <begin position="73"/>
        <end position="77"/>
    </location>
</feature>
<feature type="peptide" id="PRO_0000024103" description="Phytosulfokine-beta" evidence="2">
    <location>
        <begin position="73"/>
        <end position="76"/>
    </location>
</feature>
<feature type="propeptide" id="PRO_0000024104" evidence="2">
    <location>
        <begin position="78"/>
        <end position="81"/>
    </location>
</feature>
<feature type="modified residue" description="Sulfotyrosine" evidence="1">
    <location>
        <position position="73"/>
    </location>
</feature>
<feature type="modified residue" description="Sulfotyrosine" evidence="1">
    <location>
        <position position="75"/>
    </location>
</feature>
<feature type="sequence conflict" description="In Ref. 4; AAM65636." evidence="4" ref="4">
    <original>S</original>
    <variation>T</variation>
    <location>
        <position position="4"/>
    </location>
</feature>
<feature type="sequence conflict" description="In Ref. 4; AAM65636." evidence="4" ref="4">
    <original>R</original>
    <variation>H</variation>
    <location>
        <position position="22"/>
    </location>
</feature>
<keyword id="KW-0217">Developmental protein</keyword>
<keyword id="KW-0221">Differentiation</keyword>
<keyword id="KW-0339">Growth factor</keyword>
<keyword id="KW-1185">Reference proteome</keyword>
<keyword id="KW-0964">Secreted</keyword>
<keyword id="KW-0732">Signal</keyword>
<keyword id="KW-0765">Sulfation</keyword>
<evidence type="ECO:0000250" key="1"/>
<evidence type="ECO:0000255" key="2"/>
<evidence type="ECO:0000269" key="3">
    <source>
    </source>
</evidence>
<evidence type="ECO:0000305" key="4"/>
<reference key="1">
    <citation type="journal article" date="2001" name="Plant Physiol.">
        <title>Diversity of Arabidopsis genes encoding precursors for phytosulfokine, a peptide growth factor.</title>
        <authorList>
            <person name="Yang H."/>
            <person name="Matsubayashi Y."/>
            <person name="Nakamura K."/>
            <person name="Sakagami Y."/>
        </authorList>
    </citation>
    <scope>NUCLEOTIDE SEQUENCE [GENOMIC DNA]</scope>
    <source>
        <strain>cv. Columbia</strain>
    </source>
</reference>
<reference key="2">
    <citation type="journal article" date="2000" name="Nature">
        <title>Sequence and analysis of chromosome 3 of the plant Arabidopsis thaliana.</title>
        <authorList>
            <person name="Salanoubat M."/>
            <person name="Lemcke K."/>
            <person name="Rieger M."/>
            <person name="Ansorge W."/>
            <person name="Unseld M."/>
            <person name="Fartmann B."/>
            <person name="Valle G."/>
            <person name="Bloecker H."/>
            <person name="Perez-Alonso M."/>
            <person name="Obermaier B."/>
            <person name="Delseny M."/>
            <person name="Boutry M."/>
            <person name="Grivell L.A."/>
            <person name="Mache R."/>
            <person name="Puigdomenech P."/>
            <person name="De Simone V."/>
            <person name="Choisne N."/>
            <person name="Artiguenave F."/>
            <person name="Robert C."/>
            <person name="Brottier P."/>
            <person name="Wincker P."/>
            <person name="Cattolico L."/>
            <person name="Weissenbach J."/>
            <person name="Saurin W."/>
            <person name="Quetier F."/>
            <person name="Schaefer M."/>
            <person name="Mueller-Auer S."/>
            <person name="Gabel C."/>
            <person name="Fuchs M."/>
            <person name="Benes V."/>
            <person name="Wurmbach E."/>
            <person name="Drzonek H."/>
            <person name="Erfle H."/>
            <person name="Jordan N."/>
            <person name="Bangert S."/>
            <person name="Wiedelmann R."/>
            <person name="Kranz H."/>
            <person name="Voss H."/>
            <person name="Holland R."/>
            <person name="Brandt P."/>
            <person name="Nyakatura G."/>
            <person name="Vezzi A."/>
            <person name="D'Angelo M."/>
            <person name="Pallavicini A."/>
            <person name="Toppo S."/>
            <person name="Simionati B."/>
            <person name="Conrad A."/>
            <person name="Hornischer K."/>
            <person name="Kauer G."/>
            <person name="Loehnert T.-H."/>
            <person name="Nordsiek G."/>
            <person name="Reichelt J."/>
            <person name="Scharfe M."/>
            <person name="Schoen O."/>
            <person name="Bargues M."/>
            <person name="Terol J."/>
            <person name="Climent J."/>
            <person name="Navarro P."/>
            <person name="Collado C."/>
            <person name="Perez-Perez A."/>
            <person name="Ottenwaelder B."/>
            <person name="Duchemin D."/>
            <person name="Cooke R."/>
            <person name="Laudie M."/>
            <person name="Berger-Llauro C."/>
            <person name="Purnelle B."/>
            <person name="Masuy D."/>
            <person name="de Haan M."/>
            <person name="Maarse A.C."/>
            <person name="Alcaraz J.-P."/>
            <person name="Cottet A."/>
            <person name="Casacuberta E."/>
            <person name="Monfort A."/>
            <person name="Argiriou A."/>
            <person name="Flores M."/>
            <person name="Liguori R."/>
            <person name="Vitale D."/>
            <person name="Mannhaupt G."/>
            <person name="Haase D."/>
            <person name="Schoof H."/>
            <person name="Rudd S."/>
            <person name="Zaccaria P."/>
            <person name="Mewes H.-W."/>
            <person name="Mayer K.F.X."/>
            <person name="Kaul S."/>
            <person name="Town C.D."/>
            <person name="Koo H.L."/>
            <person name="Tallon L.J."/>
            <person name="Jenkins J."/>
            <person name="Rooney T."/>
            <person name="Rizzo M."/>
            <person name="Walts A."/>
            <person name="Utterback T."/>
            <person name="Fujii C.Y."/>
            <person name="Shea T.P."/>
            <person name="Creasy T.H."/>
            <person name="Haas B."/>
            <person name="Maiti R."/>
            <person name="Wu D."/>
            <person name="Peterson J."/>
            <person name="Van Aken S."/>
            <person name="Pai G."/>
            <person name="Militscher J."/>
            <person name="Sellers P."/>
            <person name="Gill J.E."/>
            <person name="Feldblyum T.V."/>
            <person name="Preuss D."/>
            <person name="Lin X."/>
            <person name="Nierman W.C."/>
            <person name="Salzberg S.L."/>
            <person name="White O."/>
            <person name="Venter J.C."/>
            <person name="Fraser C.M."/>
            <person name="Kaneko T."/>
            <person name="Nakamura Y."/>
            <person name="Sato S."/>
            <person name="Kato T."/>
            <person name="Asamizu E."/>
            <person name="Sasamoto S."/>
            <person name="Kimura T."/>
            <person name="Idesawa K."/>
            <person name="Kawashima K."/>
            <person name="Kishida Y."/>
            <person name="Kiyokawa C."/>
            <person name="Kohara M."/>
            <person name="Matsumoto M."/>
            <person name="Matsuno A."/>
            <person name="Muraki A."/>
            <person name="Nakayama S."/>
            <person name="Nakazaki N."/>
            <person name="Shinpo S."/>
            <person name="Takeuchi C."/>
            <person name="Wada T."/>
            <person name="Watanabe A."/>
            <person name="Yamada M."/>
            <person name="Yasuda M."/>
            <person name="Tabata S."/>
        </authorList>
    </citation>
    <scope>NUCLEOTIDE SEQUENCE [LARGE SCALE GENOMIC DNA]</scope>
    <source>
        <strain>cv. Columbia</strain>
    </source>
</reference>
<reference key="3">
    <citation type="journal article" date="2017" name="Plant J.">
        <title>Araport11: a complete reannotation of the Arabidopsis thaliana reference genome.</title>
        <authorList>
            <person name="Cheng C.Y."/>
            <person name="Krishnakumar V."/>
            <person name="Chan A.P."/>
            <person name="Thibaud-Nissen F."/>
            <person name="Schobel S."/>
            <person name="Town C.D."/>
        </authorList>
    </citation>
    <scope>GENOME REANNOTATION</scope>
    <source>
        <strain>cv. Columbia</strain>
    </source>
</reference>
<reference key="4">
    <citation type="submission" date="2002-03" db="EMBL/GenBank/DDBJ databases">
        <title>Full-length cDNA from Arabidopsis thaliana.</title>
        <authorList>
            <person name="Brover V.V."/>
            <person name="Troukhan M.E."/>
            <person name="Alexandrov N.A."/>
            <person name="Lu Y.-P."/>
            <person name="Flavell R.B."/>
            <person name="Feldmann K.A."/>
        </authorList>
    </citation>
    <scope>NUCLEOTIDE SEQUENCE [LARGE SCALE MRNA]</scope>
</reference>
<reference key="5">
    <citation type="journal article" date="2002" name="Plant Sci.">
        <title>Comparative analysis of PSK peptide growth factor precursor homologs.</title>
        <authorList>
            <person name="Lorbiecke R."/>
            <person name="Sauter M.M."/>
        </authorList>
    </citation>
    <scope>IDENTIFICATION</scope>
</reference>
<reference key="6">
    <citation type="journal article" date="2006" name="Plant Physiol.">
        <title>Disruption and overexpression of Arabidopsis phytosulfokine receptor gene affects cellular longevity and potential for growth.</title>
        <authorList>
            <person name="Matsubayashi Y."/>
            <person name="Ogawa M."/>
            <person name="Kihara H."/>
            <person name="Niwa M."/>
            <person name="Sakagami Y."/>
        </authorList>
    </citation>
    <scope>TISSUE SPECIFICITY</scope>
</reference>
<gene>
    <name type="primary">PSK6</name>
    <name type="synonym">PSK3</name>
    <name type="ordered locus">At3g44735</name>
    <name type="ORF">T32N15.2</name>
</gene>
<accession>Q8LA14</accession>
<accession>Q7PCC2</accession>
<accession>Q8W5Q9</accession>
<protein>
    <recommendedName>
        <fullName>Putative phytosulfokines 6</fullName>
        <shortName>AtPSK3_2</shortName>
        <shortName>AtPSK6</shortName>
    </recommendedName>
    <component>
        <recommendedName>
            <fullName>Phytosulfokine-alpha-like</fullName>
            <shortName>PSK-alpha-like</shortName>
            <shortName>Phytosulfokine-a-like</shortName>
        </recommendedName>
    </component>
    <component>
        <recommendedName>
            <fullName>Phytosulfokine-beta</fullName>
            <shortName>PSK-beta</shortName>
            <shortName>Phytosulfokine-b</shortName>
        </recommendedName>
    </component>
</protein>
<organism>
    <name type="scientific">Arabidopsis thaliana</name>
    <name type="common">Mouse-ear cress</name>
    <dbReference type="NCBI Taxonomy" id="3702"/>
    <lineage>
        <taxon>Eukaryota</taxon>
        <taxon>Viridiplantae</taxon>
        <taxon>Streptophyta</taxon>
        <taxon>Embryophyta</taxon>
        <taxon>Tracheophyta</taxon>
        <taxon>Spermatophyta</taxon>
        <taxon>Magnoliopsida</taxon>
        <taxon>eudicotyledons</taxon>
        <taxon>Gunneridae</taxon>
        <taxon>Pentapetalae</taxon>
        <taxon>rosids</taxon>
        <taxon>malvids</taxon>
        <taxon>Brassicales</taxon>
        <taxon>Brassicaceae</taxon>
        <taxon>Camelineae</taxon>
        <taxon>Arabidopsis</taxon>
    </lineage>
</organism>
<sequence length="81" mass="9292">MKQSLCLAVLFLILSTSSSAIRRGKEDQEINPLVSATSVEEDSVNKLMGMEYCGEGDEECLRRRMMTESHLDYIYTQHHKH</sequence>
<name>PSK6_ARATH</name>
<comment type="function">
    <text evidence="1">Promotes plant cell differentiation, organogenesis and somatic embryogenesis as well as cell proliferation.</text>
</comment>
<comment type="subcellular location">
    <subcellularLocation>
        <location evidence="1">Secreted</location>
    </subcellularLocation>
</comment>
<comment type="tissue specificity">
    <text evidence="3">Expressed in roots, leaves, stems, flowers and siliques. Most abundant in vascular bundles and in root tips.</text>
</comment>
<comment type="PTM">
    <text evidence="1">Sulfation is important for activity and for the binding to a putative membrane receptor.</text>
</comment>
<comment type="PTM">
    <text evidence="1">PSK-beta is an enzymatic derivative of PSK-alpha.</text>
</comment>
<comment type="similarity">
    <text evidence="4">Belongs to the phytosulfokine family.</text>
</comment>
<dbReference type="EMBL" id="AB074573">
    <property type="protein sequence ID" value="BAB72177.2"/>
    <property type="molecule type" value="Genomic_DNA"/>
</dbReference>
<dbReference type="EMBL" id="AC002534">
    <property type="status" value="NOT_ANNOTATED_CDS"/>
    <property type="molecule type" value="Genomic_DNA"/>
</dbReference>
<dbReference type="EMBL" id="CP002686">
    <property type="protein sequence ID" value="AEE77941.1"/>
    <property type="molecule type" value="Genomic_DNA"/>
</dbReference>
<dbReference type="EMBL" id="CP002686">
    <property type="protein sequence ID" value="AEE77942.1"/>
    <property type="molecule type" value="Genomic_DNA"/>
</dbReference>
<dbReference type="EMBL" id="AY088090">
    <property type="protein sequence ID" value="AAM65636.1"/>
    <property type="molecule type" value="mRNA"/>
</dbReference>
<dbReference type="EMBL" id="BK000107">
    <property type="protein sequence ID" value="DAA00271.1"/>
    <property type="molecule type" value="Genomic_DNA"/>
</dbReference>
<dbReference type="RefSeq" id="NP_001190011.1">
    <property type="nucleotide sequence ID" value="NM_001203082.1"/>
</dbReference>
<dbReference type="RefSeq" id="NP_566871.1">
    <property type="nucleotide sequence ID" value="NM_114342.3"/>
</dbReference>
<dbReference type="FunCoup" id="Q8LA14">
    <property type="interactions" value="84"/>
</dbReference>
<dbReference type="STRING" id="3702.Q8LA14"/>
<dbReference type="PaxDb" id="3702-AT3G44735.2"/>
<dbReference type="ProteomicsDB" id="249361"/>
<dbReference type="EnsemblPlants" id="AT3G44735.1">
    <property type="protein sequence ID" value="AT3G44735.1"/>
    <property type="gene ID" value="AT3G44735"/>
</dbReference>
<dbReference type="EnsemblPlants" id="AT3G44735.2">
    <property type="protein sequence ID" value="AT3G44735.2"/>
    <property type="gene ID" value="AT3G44735"/>
</dbReference>
<dbReference type="GeneID" id="823603"/>
<dbReference type="Gramene" id="AT3G44735.1">
    <property type="protein sequence ID" value="AT3G44735.1"/>
    <property type="gene ID" value="AT3G44735"/>
</dbReference>
<dbReference type="Gramene" id="AT3G44735.2">
    <property type="protein sequence ID" value="AT3G44735.2"/>
    <property type="gene ID" value="AT3G44735"/>
</dbReference>
<dbReference type="KEGG" id="ath:AT3G44735"/>
<dbReference type="Araport" id="AT3G44735"/>
<dbReference type="TAIR" id="AT3G44735">
    <property type="gene designation" value="PSK3"/>
</dbReference>
<dbReference type="eggNOG" id="ENOG502S9S0">
    <property type="taxonomic scope" value="Eukaryota"/>
</dbReference>
<dbReference type="HOGENOM" id="CLU_132277_1_0_1"/>
<dbReference type="InParanoid" id="Q8LA14"/>
<dbReference type="OMA" id="MMKQNVY"/>
<dbReference type="PhylomeDB" id="Q8LA14"/>
<dbReference type="PRO" id="PR:Q8LA14"/>
<dbReference type="Proteomes" id="UP000006548">
    <property type="component" value="Chromosome 3"/>
</dbReference>
<dbReference type="ExpressionAtlas" id="Q8LA14">
    <property type="expression patterns" value="baseline and differential"/>
</dbReference>
<dbReference type="GO" id="GO:0005576">
    <property type="term" value="C:extracellular region"/>
    <property type="evidence" value="ECO:0007669"/>
    <property type="project" value="UniProtKB-SubCell"/>
</dbReference>
<dbReference type="GO" id="GO:0008083">
    <property type="term" value="F:growth factor activity"/>
    <property type="evidence" value="ECO:0007669"/>
    <property type="project" value="UniProtKB-KW"/>
</dbReference>
<dbReference type="GO" id="GO:0030154">
    <property type="term" value="P:cell differentiation"/>
    <property type="evidence" value="ECO:0007669"/>
    <property type="project" value="UniProtKB-KW"/>
</dbReference>
<dbReference type="GO" id="GO:0008283">
    <property type="term" value="P:cell population proliferation"/>
    <property type="evidence" value="ECO:0007669"/>
    <property type="project" value="InterPro"/>
</dbReference>
<dbReference type="InterPro" id="IPR009438">
    <property type="entry name" value="Phytosulfokine"/>
</dbReference>
<dbReference type="PANTHER" id="PTHR33285">
    <property type="entry name" value="PHYTOSULFOKINES 3"/>
    <property type="match status" value="1"/>
</dbReference>
<dbReference type="PANTHER" id="PTHR33285:SF22">
    <property type="entry name" value="PHYTOSULFOKINES 6-RELATED"/>
    <property type="match status" value="1"/>
</dbReference>
<dbReference type="Pfam" id="PF06404">
    <property type="entry name" value="PSK"/>
    <property type="match status" value="1"/>
</dbReference>
<proteinExistence type="evidence at transcript level"/>